<sequence length="68" mass="7731">MCAVAYRRSLHYDSWCSKEKTPSNHRVNCLLDPKLLLESPEKLGCYCIDHCNLHLKGQIVWTAPDGGD</sequence>
<accession>A9CBA1</accession>
<name>RH1_ADES1</name>
<protein>
    <recommendedName>
        <fullName>Protein RH1</fullName>
    </recommendedName>
</protein>
<keyword id="KW-1185">Reference proteome</keyword>
<organismHost>
    <name type="scientific">Pantherophis guttatus</name>
    <name type="common">Corn snake</name>
    <name type="synonym">Elaphe guttata</name>
    <dbReference type="NCBI Taxonomy" id="94885"/>
</organismHost>
<dbReference type="EMBL" id="DQ106414">
    <property type="protein sequence ID" value="ABA47251.1"/>
    <property type="molecule type" value="Genomic_DNA"/>
</dbReference>
<dbReference type="RefSeq" id="YP_001552268.1">
    <property type="nucleotide sequence ID" value="NC_009989.1"/>
</dbReference>
<dbReference type="GeneID" id="10973882"/>
<dbReference type="KEGG" id="vg:10973882"/>
<dbReference type="OrthoDB" id="20302at10239"/>
<dbReference type="Proteomes" id="UP000136605">
    <property type="component" value="Genome"/>
</dbReference>
<reference key="1">
    <citation type="journal article" date="2002" name="J. Gen. Virol.">
        <title>Genetic analysis of an adenovirus isolated from corn snake (Elaphe guttata) implies common origin with the members of the proposed new genus Atadenovirus.</title>
        <authorList>
            <person name="Farkas S.L."/>
            <person name="Benko M."/>
            <person name="Elo P.T."/>
            <person name="Ursu K."/>
            <person name="Dan A."/>
            <person name="Ahne W."/>
            <person name="Harrach B."/>
        </authorList>
    </citation>
    <scope>NUCLEOTIDE SEQUENCE [GENOMIC DNA]</scope>
</reference>
<feature type="chain" id="PRO_0000425924" description="Protein RH1">
    <location>
        <begin position="1"/>
        <end position="68"/>
    </location>
</feature>
<proteinExistence type="predicted"/>
<organism>
    <name type="scientific">Snake adenovirus serotype 1</name>
    <name type="common">SnAdV-1</name>
    <dbReference type="NCBI Taxonomy" id="189830"/>
    <lineage>
        <taxon>Viruses</taxon>
        <taxon>Varidnaviria</taxon>
        <taxon>Bamfordvirae</taxon>
        <taxon>Preplasmiviricota</taxon>
        <taxon>Tectiliviricetes</taxon>
        <taxon>Rowavirales</taxon>
        <taxon>Adenoviridae</taxon>
        <taxon>Atadenovirus</taxon>
        <taxon>Snake atadenovirus A</taxon>
    </lineage>
</organism>